<feature type="chain" id="PRO_0000399893" description="MICOS complex subunit MIC12">
    <location>
        <begin position="1"/>
        <end position="106"/>
    </location>
</feature>
<feature type="transmembrane region" description="Helical" evidence="2">
    <location>
        <begin position="11"/>
        <end position="27"/>
    </location>
</feature>
<gene>
    <name type="primary">AIM5</name>
    <name type="synonym">FMP51</name>
    <name type="ORF">SCRG_02707</name>
</gene>
<name>MIC12_YEAS1</name>
<reference key="1">
    <citation type="submission" date="2005-03" db="EMBL/GenBank/DDBJ databases">
        <title>Annotation of the Saccharomyces cerevisiae RM11-1a genome.</title>
        <authorList>
            <consortium name="The Broad Institute Genome Sequencing Platform"/>
            <person name="Birren B.W."/>
            <person name="Lander E.S."/>
            <person name="Galagan J.E."/>
            <person name="Nusbaum C."/>
            <person name="Devon K."/>
            <person name="Cuomo C."/>
            <person name="Jaffe D.B."/>
            <person name="Butler J."/>
            <person name="Alvarez P."/>
            <person name="Gnerre S."/>
            <person name="Grabherr M."/>
            <person name="Kleber M."/>
            <person name="Mauceli E.W."/>
            <person name="Brockman W."/>
            <person name="MacCallum I.A."/>
            <person name="Rounsley S."/>
            <person name="Young S.K."/>
            <person name="LaButti K."/>
            <person name="Pushparaj V."/>
            <person name="DeCaprio D."/>
            <person name="Crawford M."/>
            <person name="Koehrsen M."/>
            <person name="Engels R."/>
            <person name="Montgomery P."/>
            <person name="Pearson M."/>
            <person name="Howarth C."/>
            <person name="Larson L."/>
            <person name="Luoma S."/>
            <person name="White J."/>
            <person name="O'Leary S."/>
            <person name="Kodira C.D."/>
            <person name="Zeng Q."/>
            <person name="Yandava C."/>
            <person name="Alvarado L."/>
            <person name="Pratt S."/>
            <person name="Kruglyak L."/>
        </authorList>
    </citation>
    <scope>NUCLEOTIDE SEQUENCE [LARGE SCALE GENOMIC DNA]</scope>
    <source>
        <strain>RM11-1a</strain>
    </source>
</reference>
<dbReference type="EMBL" id="CH408048">
    <property type="protein sequence ID" value="EDV11852.1"/>
    <property type="molecule type" value="Genomic_DNA"/>
</dbReference>
<dbReference type="SMR" id="B3LMP9"/>
<dbReference type="HOGENOM" id="CLU_164154_0_0_1"/>
<dbReference type="OrthoDB" id="9381at4893"/>
<dbReference type="Proteomes" id="UP000008335">
    <property type="component" value="Unassembled WGS sequence"/>
</dbReference>
<dbReference type="GO" id="GO:0061617">
    <property type="term" value="C:MICOS complex"/>
    <property type="evidence" value="ECO:0007669"/>
    <property type="project" value="InterPro"/>
</dbReference>
<dbReference type="GO" id="GO:0044284">
    <property type="term" value="C:mitochondrial crista junction"/>
    <property type="evidence" value="ECO:0007669"/>
    <property type="project" value="InterPro"/>
</dbReference>
<dbReference type="GO" id="GO:0042407">
    <property type="term" value="P:cristae formation"/>
    <property type="evidence" value="ECO:0007669"/>
    <property type="project" value="InterPro"/>
</dbReference>
<dbReference type="InterPro" id="IPR031463">
    <property type="entry name" value="Mic12"/>
</dbReference>
<dbReference type="Pfam" id="PF17050">
    <property type="entry name" value="AIM5"/>
    <property type="match status" value="1"/>
</dbReference>
<sequence length="106" mass="12388">MSKLGPLARSVKWTLSVGVIGSVFYLYRYSNNGYFYDHDATWLKQDHQVQDLVDRKEVVPGETRNRKLVVTDDGTAWSRTMGESIKDIWNEQIRNSVDWIYSWGKN</sequence>
<evidence type="ECO:0000250" key="1"/>
<evidence type="ECO:0000255" key="2"/>
<evidence type="ECO:0000305" key="3"/>
<protein>
    <recommendedName>
        <fullName>MICOS complex subunit MIC12</fullName>
    </recommendedName>
    <alternativeName>
        <fullName>Altered inheritance of mitochondria protein 5, mitochondrial</fullName>
    </alternativeName>
    <alternativeName>
        <fullName>Found in mitochondrial proteome protein 51</fullName>
    </alternativeName>
</protein>
<accession>B3LMP9</accession>
<organism>
    <name type="scientific">Saccharomyces cerevisiae (strain RM11-1a)</name>
    <name type="common">Baker's yeast</name>
    <dbReference type="NCBI Taxonomy" id="285006"/>
    <lineage>
        <taxon>Eukaryota</taxon>
        <taxon>Fungi</taxon>
        <taxon>Dikarya</taxon>
        <taxon>Ascomycota</taxon>
        <taxon>Saccharomycotina</taxon>
        <taxon>Saccharomycetes</taxon>
        <taxon>Saccharomycetales</taxon>
        <taxon>Saccharomycetaceae</taxon>
        <taxon>Saccharomyces</taxon>
    </lineage>
</organism>
<keyword id="KW-0472">Membrane</keyword>
<keyword id="KW-0496">Mitochondrion</keyword>
<keyword id="KW-0999">Mitochondrion inner membrane</keyword>
<keyword id="KW-0812">Transmembrane</keyword>
<keyword id="KW-1133">Transmembrane helix</keyword>
<proteinExistence type="inferred from homology"/>
<comment type="function">
    <text evidence="1">Component of the MICOS complex, a large protein complex of the mitochondrial inner membrane that plays crucial roles in the maintenance of crista junctions, inner membrane architecture, and formation of contact sites to the outer membrane.</text>
</comment>
<comment type="subunit">
    <text evidence="1">Component of the mitochondrial contact site and cristae organizing system (MICOS) complex.</text>
</comment>
<comment type="subcellular location">
    <subcellularLocation>
        <location evidence="1">Mitochondrion inner membrane</location>
        <topology evidence="1">Single-pass membrane protein</topology>
    </subcellularLocation>
</comment>
<comment type="similarity">
    <text evidence="3">Belongs to the MICOS complex subunit Mic12 family.</text>
</comment>